<protein>
    <recommendedName>
        <fullName>Probable CDP-diacylglycerol pyrophosphatase</fullName>
        <ecNumber>3.6.1.26</ecNumber>
    </recommendedName>
    <alternativeName>
        <fullName>CDP-diacylglycerol phosphatidylhydrolase</fullName>
    </alternativeName>
    <alternativeName>
        <fullName>CDP-diglyceride hydrolase</fullName>
    </alternativeName>
</protein>
<proteinExistence type="inferred from homology"/>
<reference key="1">
    <citation type="journal article" date="2003" name="Proc. Natl. Acad. Sci. U.S.A.">
        <title>The complete genome sequence of Mycobacterium bovis.</title>
        <authorList>
            <person name="Garnier T."/>
            <person name="Eiglmeier K."/>
            <person name="Camus J.-C."/>
            <person name="Medina N."/>
            <person name="Mansoor H."/>
            <person name="Pryor M."/>
            <person name="Duthoy S."/>
            <person name="Grondin S."/>
            <person name="Lacroix C."/>
            <person name="Monsempe C."/>
            <person name="Simon S."/>
            <person name="Harris B."/>
            <person name="Atkin R."/>
            <person name="Doggett J."/>
            <person name="Mayes R."/>
            <person name="Keating L."/>
            <person name="Wheeler P.R."/>
            <person name="Parkhill J."/>
            <person name="Barrell B.G."/>
            <person name="Cole S.T."/>
            <person name="Gordon S.V."/>
            <person name="Hewinson R.G."/>
        </authorList>
    </citation>
    <scope>NUCLEOTIDE SEQUENCE [LARGE SCALE GENOMIC DNA]</scope>
    <source>
        <strain>ATCC BAA-935 / AF2122/97</strain>
    </source>
</reference>
<reference key="2">
    <citation type="journal article" date="2017" name="Genome Announc.">
        <title>Updated reference genome sequence and annotation of Mycobacterium bovis AF2122/97.</title>
        <authorList>
            <person name="Malone K.M."/>
            <person name="Farrell D."/>
            <person name="Stuber T.P."/>
            <person name="Schubert O.T."/>
            <person name="Aebersold R."/>
            <person name="Robbe-Austerman S."/>
            <person name="Gordon S.V."/>
        </authorList>
    </citation>
    <scope>NUCLEOTIDE SEQUENCE [LARGE SCALE GENOMIC DNA]</scope>
    <scope>GENOME REANNOTATION</scope>
    <source>
        <strain>ATCC BAA-935 / AF2122/97</strain>
    </source>
</reference>
<name>CDH_MYCBO</name>
<sequence>MPKSRRAVSLSVLIGAVIAALAGALIAVTVPARPNRPEADREALWKIVHDRCEFGYRRTGAYAPCTFVDEQSGTALYKADFDPYQFLLIPLARITGIEDPALRESAGRNYLYDAWAARFLVTARLNNSLPESDVVLTINPKNARTQDQLHIHISCSSPTTSAALRNVDTSEYVGWKQLPIDLGGRRFQGLAVDTKAFESRNLFRDIYLKVTADGKKMENASIAVANVAQDQFLLLLAEGTEDQPVAAETLQDHDCSITKS</sequence>
<evidence type="ECO:0000255" key="1"/>
<evidence type="ECO:0000305" key="2"/>
<accession>P63752</accession>
<accession>A0A1R3Y0Q7</accession>
<accession>Q50676</accession>
<accession>X2BKE3</accession>
<dbReference type="EC" id="3.6.1.26"/>
<dbReference type="EMBL" id="LT708304">
    <property type="protein sequence ID" value="SIU00923.1"/>
    <property type="molecule type" value="Genomic_DNA"/>
</dbReference>
<dbReference type="RefSeq" id="NP_855960.1">
    <property type="nucleotide sequence ID" value="NC_002945.3"/>
</dbReference>
<dbReference type="RefSeq" id="WP_003411717.1">
    <property type="nucleotide sequence ID" value="NC_002945.4"/>
</dbReference>
<dbReference type="SMR" id="P63752"/>
<dbReference type="KEGG" id="mbo:BQ2027_MB2311"/>
<dbReference type="PATRIC" id="fig|233413.5.peg.2535"/>
<dbReference type="UniPathway" id="UPA00609">
    <property type="reaction ID" value="UER00664"/>
</dbReference>
<dbReference type="Proteomes" id="UP000001419">
    <property type="component" value="Chromosome"/>
</dbReference>
<dbReference type="GO" id="GO:0005886">
    <property type="term" value="C:plasma membrane"/>
    <property type="evidence" value="ECO:0007669"/>
    <property type="project" value="UniProtKB-SubCell"/>
</dbReference>
<dbReference type="GO" id="GO:0008715">
    <property type="term" value="F:CDP-diacylglycerol diphosphatase activity"/>
    <property type="evidence" value="ECO:0007669"/>
    <property type="project" value="UniProtKB-UniRule"/>
</dbReference>
<dbReference type="GO" id="GO:0046342">
    <property type="term" value="P:CDP-diacylglycerol catabolic process"/>
    <property type="evidence" value="ECO:0007669"/>
    <property type="project" value="UniProtKB-UniRule"/>
</dbReference>
<dbReference type="GO" id="GO:0008654">
    <property type="term" value="P:phospholipid biosynthetic process"/>
    <property type="evidence" value="ECO:0007669"/>
    <property type="project" value="UniProtKB-KW"/>
</dbReference>
<dbReference type="Gene3D" id="3.30.428.30">
    <property type="entry name" value="HIT family - CDH-like"/>
    <property type="match status" value="1"/>
</dbReference>
<dbReference type="HAMAP" id="MF_00319">
    <property type="entry name" value="Cdh"/>
    <property type="match status" value="1"/>
</dbReference>
<dbReference type="InterPro" id="IPR003763">
    <property type="entry name" value="CDP-diacylglyc_Pase"/>
</dbReference>
<dbReference type="InterPro" id="IPR036265">
    <property type="entry name" value="HIT-like_sf"/>
</dbReference>
<dbReference type="NCBIfam" id="NF003982">
    <property type="entry name" value="PRK05471.1-1"/>
    <property type="match status" value="1"/>
</dbReference>
<dbReference type="Pfam" id="PF02611">
    <property type="entry name" value="CDH"/>
    <property type="match status" value="1"/>
</dbReference>
<dbReference type="PIRSF" id="PIRSF001273">
    <property type="entry name" value="CDH"/>
    <property type="match status" value="1"/>
</dbReference>
<dbReference type="SUPFAM" id="SSF54197">
    <property type="entry name" value="HIT-like"/>
    <property type="match status" value="1"/>
</dbReference>
<gene>
    <name type="primary">cdh</name>
    <name type="ordered locus">BQ2027_MB2311</name>
</gene>
<feature type="chain" id="PRO_0000198581" description="Probable CDP-diacylglycerol pyrophosphatase">
    <location>
        <begin position="1"/>
        <end position="260"/>
    </location>
</feature>
<feature type="transmembrane region" description="Helical" evidence="1">
    <location>
        <begin position="10"/>
        <end position="30"/>
    </location>
</feature>
<comment type="catalytic activity">
    <reaction>
        <text>a CDP-1,2-diacyl-sn-glycerol + H2O = a 1,2-diacyl-sn-glycero-3-phosphate + CMP + 2 H(+)</text>
        <dbReference type="Rhea" id="RHEA:15221"/>
        <dbReference type="ChEBI" id="CHEBI:15377"/>
        <dbReference type="ChEBI" id="CHEBI:15378"/>
        <dbReference type="ChEBI" id="CHEBI:58332"/>
        <dbReference type="ChEBI" id="CHEBI:58608"/>
        <dbReference type="ChEBI" id="CHEBI:60377"/>
        <dbReference type="EC" id="3.6.1.26"/>
    </reaction>
</comment>
<comment type="pathway">
    <text>Phospholipid metabolism; CDP-diacylglycerol degradation; phosphatidate from CDP-diacylglycerol: step 1/1.</text>
</comment>
<comment type="subcellular location">
    <subcellularLocation>
        <location evidence="2">Cell membrane</location>
        <topology evidence="2">Single-pass membrane protein</topology>
    </subcellularLocation>
</comment>
<comment type="similarity">
    <text evidence="2">Belongs to the Cdh family.</text>
</comment>
<organism>
    <name type="scientific">Mycobacterium bovis (strain ATCC BAA-935 / AF2122/97)</name>
    <dbReference type="NCBI Taxonomy" id="233413"/>
    <lineage>
        <taxon>Bacteria</taxon>
        <taxon>Bacillati</taxon>
        <taxon>Actinomycetota</taxon>
        <taxon>Actinomycetes</taxon>
        <taxon>Mycobacteriales</taxon>
        <taxon>Mycobacteriaceae</taxon>
        <taxon>Mycobacterium</taxon>
        <taxon>Mycobacterium tuberculosis complex</taxon>
    </lineage>
</organism>
<keyword id="KW-1003">Cell membrane</keyword>
<keyword id="KW-0378">Hydrolase</keyword>
<keyword id="KW-0444">Lipid biosynthesis</keyword>
<keyword id="KW-0443">Lipid metabolism</keyword>
<keyword id="KW-0472">Membrane</keyword>
<keyword id="KW-0594">Phospholipid biosynthesis</keyword>
<keyword id="KW-1208">Phospholipid metabolism</keyword>
<keyword id="KW-1185">Reference proteome</keyword>
<keyword id="KW-0812">Transmembrane</keyword>
<keyword id="KW-1133">Transmembrane helix</keyword>